<feature type="chain" id="PRO_0000437923" description="C6 finger domain transcription factor nscR">
    <location>
        <begin position="1"/>
        <end position="774"/>
    </location>
</feature>
<feature type="DNA-binding region" description="Zn(2)-C6 fungal-type" evidence="1">
    <location>
        <begin position="17"/>
        <end position="43"/>
    </location>
</feature>
<feature type="region of interest" description="Disordered" evidence="2">
    <location>
        <begin position="61"/>
        <end position="94"/>
    </location>
</feature>
<feature type="region of interest" description="Disordered" evidence="2">
    <location>
        <begin position="536"/>
        <end position="559"/>
    </location>
</feature>
<feature type="region of interest" description="Disordered" evidence="2">
    <location>
        <begin position="665"/>
        <end position="697"/>
    </location>
</feature>
<feature type="compositionally biased region" description="Pro residues" evidence="2">
    <location>
        <begin position="67"/>
        <end position="78"/>
    </location>
</feature>
<feature type="compositionally biased region" description="Low complexity" evidence="2">
    <location>
        <begin position="536"/>
        <end position="548"/>
    </location>
</feature>
<feature type="compositionally biased region" description="Polar residues" evidence="2">
    <location>
        <begin position="665"/>
        <end position="674"/>
    </location>
</feature>
<feature type="compositionally biased region" description="Low complexity" evidence="2">
    <location>
        <begin position="675"/>
        <end position="697"/>
    </location>
</feature>
<proteinExistence type="inferred from homology"/>
<accession>Q4WA59</accession>
<organism>
    <name type="scientific">Aspergillus fumigatus (strain ATCC MYA-4609 / CBS 101355 / FGSC A1100 / Af293)</name>
    <name type="common">Neosartorya fumigata</name>
    <dbReference type="NCBI Taxonomy" id="330879"/>
    <lineage>
        <taxon>Eukaryota</taxon>
        <taxon>Fungi</taxon>
        <taxon>Dikarya</taxon>
        <taxon>Ascomycota</taxon>
        <taxon>Pezizomycotina</taxon>
        <taxon>Eurotiomycetes</taxon>
        <taxon>Eurotiomycetidae</taxon>
        <taxon>Eurotiales</taxon>
        <taxon>Aspergillaceae</taxon>
        <taxon>Aspergillus</taxon>
        <taxon>Aspergillus subgen. Fumigati</taxon>
    </lineage>
</organism>
<protein>
    <recommendedName>
        <fullName evidence="3">C6 finger domain transcription factor nscR</fullName>
    </recommendedName>
    <alternativeName>
        <fullName evidence="3">Neosartiricin biosynthesis protein R</fullName>
    </alternativeName>
</protein>
<reference key="1">
    <citation type="journal article" date="2005" name="Nature">
        <title>Genomic sequence of the pathogenic and allergenic filamentous fungus Aspergillus fumigatus.</title>
        <authorList>
            <person name="Nierman W.C."/>
            <person name="Pain A."/>
            <person name="Anderson M.J."/>
            <person name="Wortman J.R."/>
            <person name="Kim H.S."/>
            <person name="Arroyo J."/>
            <person name="Berriman M."/>
            <person name="Abe K."/>
            <person name="Archer D.B."/>
            <person name="Bermejo C."/>
            <person name="Bennett J.W."/>
            <person name="Bowyer P."/>
            <person name="Chen D."/>
            <person name="Collins M."/>
            <person name="Coulsen R."/>
            <person name="Davies R."/>
            <person name="Dyer P.S."/>
            <person name="Farman M.L."/>
            <person name="Fedorova N."/>
            <person name="Fedorova N.D."/>
            <person name="Feldblyum T.V."/>
            <person name="Fischer R."/>
            <person name="Fosker N."/>
            <person name="Fraser A."/>
            <person name="Garcia J.L."/>
            <person name="Garcia M.J."/>
            <person name="Goble A."/>
            <person name="Goldman G.H."/>
            <person name="Gomi K."/>
            <person name="Griffith-Jones S."/>
            <person name="Gwilliam R."/>
            <person name="Haas B.J."/>
            <person name="Haas H."/>
            <person name="Harris D.E."/>
            <person name="Horiuchi H."/>
            <person name="Huang J."/>
            <person name="Humphray S."/>
            <person name="Jimenez J."/>
            <person name="Keller N."/>
            <person name="Khouri H."/>
            <person name="Kitamoto K."/>
            <person name="Kobayashi T."/>
            <person name="Konzack S."/>
            <person name="Kulkarni R."/>
            <person name="Kumagai T."/>
            <person name="Lafton A."/>
            <person name="Latge J.-P."/>
            <person name="Li W."/>
            <person name="Lord A."/>
            <person name="Lu C."/>
            <person name="Majoros W.H."/>
            <person name="May G.S."/>
            <person name="Miller B.L."/>
            <person name="Mohamoud Y."/>
            <person name="Molina M."/>
            <person name="Monod M."/>
            <person name="Mouyna I."/>
            <person name="Mulligan S."/>
            <person name="Murphy L.D."/>
            <person name="O'Neil S."/>
            <person name="Paulsen I."/>
            <person name="Penalva M.A."/>
            <person name="Pertea M."/>
            <person name="Price C."/>
            <person name="Pritchard B.L."/>
            <person name="Quail M.A."/>
            <person name="Rabbinowitsch E."/>
            <person name="Rawlins N."/>
            <person name="Rajandream M.A."/>
            <person name="Reichard U."/>
            <person name="Renauld H."/>
            <person name="Robson G.D."/>
            <person name="Rodriguez de Cordoba S."/>
            <person name="Rodriguez-Pena J.M."/>
            <person name="Ronning C.M."/>
            <person name="Rutter S."/>
            <person name="Salzberg S.L."/>
            <person name="Sanchez M."/>
            <person name="Sanchez-Ferrero J.C."/>
            <person name="Saunders D."/>
            <person name="Seeger K."/>
            <person name="Squares R."/>
            <person name="Squares S."/>
            <person name="Takeuchi M."/>
            <person name="Tekaia F."/>
            <person name="Turner G."/>
            <person name="Vazquez de Aldana C.R."/>
            <person name="Weidman J."/>
            <person name="White O."/>
            <person name="Woodward J.R."/>
            <person name="Yu J.-H."/>
            <person name="Fraser C.M."/>
            <person name="Galagan J.E."/>
            <person name="Asai K."/>
            <person name="Machida M."/>
            <person name="Hall N."/>
            <person name="Barrell B.G."/>
            <person name="Denning D.W."/>
        </authorList>
    </citation>
    <scope>NUCLEOTIDE SEQUENCE [LARGE SCALE GENOMIC DNA]</scope>
    <source>
        <strain>ATCC MYA-4609 / CBS 101355 / FGSC A1100 / Af293</strain>
    </source>
</reference>
<reference key="2">
    <citation type="journal article" date="2013" name="ACS Synth. Biol.">
        <title>Discovery of cryptic polyketide metabolites from dermatophytes using heterologous expression in Aspergillus nidulans.</title>
        <authorList>
            <person name="Yin W.B."/>
            <person name="Chooi Y.H."/>
            <person name="Smith A.R."/>
            <person name="Cacho R.A."/>
            <person name="Hu Y."/>
            <person name="White T.C."/>
            <person name="Tang Y."/>
        </authorList>
    </citation>
    <scope>FUNCTION</scope>
</reference>
<reference key="3">
    <citation type="journal article" date="2013" name="Org. Lett.">
        <title>Genome mining of a prenylated and immunosuppressive polyketide from pathogenic fungi.</title>
        <authorList>
            <person name="Chooi Y.H."/>
            <person name="Fang J."/>
            <person name="Liu H."/>
            <person name="Filler S.G."/>
            <person name="Wang P."/>
            <person name="Tang Y."/>
        </authorList>
    </citation>
    <scope>FUNCTION</scope>
</reference>
<keyword id="KW-0238">DNA-binding</keyword>
<keyword id="KW-0479">Metal-binding</keyword>
<keyword id="KW-0539">Nucleus</keyword>
<keyword id="KW-1185">Reference proteome</keyword>
<keyword id="KW-0804">Transcription</keyword>
<keyword id="KW-0805">Transcription regulation</keyword>
<keyword id="KW-0862">Zinc</keyword>
<comment type="function">
    <text evidence="4 5">Transcription factor that specifically regulates the neosartoricin biosynthesis gene cluster (PubMed:23368997, PubMed:23758576).</text>
</comment>
<comment type="subcellular location">
    <subcellularLocation>
        <location evidence="1">Nucleus</location>
    </subcellularLocation>
</comment>
<name>NSCR_ASPFU</name>
<dbReference type="EMBL" id="AAHF01000015">
    <property type="protein sequence ID" value="EAL84877.1"/>
    <property type="molecule type" value="Genomic_DNA"/>
</dbReference>
<dbReference type="RefSeq" id="XP_746915.1">
    <property type="nucleotide sequence ID" value="XM_741822.1"/>
</dbReference>
<dbReference type="SMR" id="Q4WA59"/>
<dbReference type="STRING" id="330879.Q4WA59"/>
<dbReference type="EnsemblFungi" id="EAL84877">
    <property type="protein sequence ID" value="EAL84877"/>
    <property type="gene ID" value="AFUA_7G00130"/>
</dbReference>
<dbReference type="GeneID" id="3504312"/>
<dbReference type="KEGG" id="afm:AFUA_7G00130"/>
<dbReference type="VEuPathDB" id="FungiDB:Afu7g00130"/>
<dbReference type="eggNOG" id="ENOG502SHJA">
    <property type="taxonomic scope" value="Eukaryota"/>
</dbReference>
<dbReference type="HOGENOM" id="CLU_004083_7_1_1"/>
<dbReference type="InParanoid" id="Q4WA59"/>
<dbReference type="OMA" id="LMHTDPR"/>
<dbReference type="OrthoDB" id="435881at2759"/>
<dbReference type="Proteomes" id="UP000002530">
    <property type="component" value="Chromosome 7"/>
</dbReference>
<dbReference type="GO" id="GO:0005634">
    <property type="term" value="C:nucleus"/>
    <property type="evidence" value="ECO:0007669"/>
    <property type="project" value="UniProtKB-SubCell"/>
</dbReference>
<dbReference type="GO" id="GO:0003677">
    <property type="term" value="F:DNA binding"/>
    <property type="evidence" value="ECO:0007669"/>
    <property type="project" value="UniProtKB-KW"/>
</dbReference>
<dbReference type="GO" id="GO:0000981">
    <property type="term" value="F:DNA-binding transcription factor activity, RNA polymerase II-specific"/>
    <property type="evidence" value="ECO:0007669"/>
    <property type="project" value="InterPro"/>
</dbReference>
<dbReference type="GO" id="GO:0008270">
    <property type="term" value="F:zinc ion binding"/>
    <property type="evidence" value="ECO:0007669"/>
    <property type="project" value="InterPro"/>
</dbReference>
<dbReference type="GO" id="GO:0006351">
    <property type="term" value="P:DNA-templated transcription"/>
    <property type="evidence" value="ECO:0007669"/>
    <property type="project" value="InterPro"/>
</dbReference>
<dbReference type="GO" id="GO:1900378">
    <property type="term" value="P:positive regulation of secondary metabolite biosynthetic process"/>
    <property type="evidence" value="ECO:0000315"/>
    <property type="project" value="AspGD"/>
</dbReference>
<dbReference type="GO" id="GO:0044550">
    <property type="term" value="P:secondary metabolite biosynthetic process"/>
    <property type="evidence" value="ECO:0000315"/>
    <property type="project" value="AspGD"/>
</dbReference>
<dbReference type="CDD" id="cd12148">
    <property type="entry name" value="fungal_TF_MHR"/>
    <property type="match status" value="1"/>
</dbReference>
<dbReference type="CDD" id="cd00067">
    <property type="entry name" value="GAL4"/>
    <property type="match status" value="1"/>
</dbReference>
<dbReference type="Gene3D" id="4.10.240.10">
    <property type="entry name" value="Zn(2)-C6 fungal-type DNA-binding domain"/>
    <property type="match status" value="1"/>
</dbReference>
<dbReference type="InterPro" id="IPR050613">
    <property type="entry name" value="Sec_Metabolite_Reg"/>
</dbReference>
<dbReference type="InterPro" id="IPR007219">
    <property type="entry name" value="Transcription_factor_dom_fun"/>
</dbReference>
<dbReference type="InterPro" id="IPR036864">
    <property type="entry name" value="Zn2-C6_fun-type_DNA-bd_sf"/>
</dbReference>
<dbReference type="InterPro" id="IPR001138">
    <property type="entry name" value="Zn2Cys6_DnaBD"/>
</dbReference>
<dbReference type="PANTHER" id="PTHR31001">
    <property type="entry name" value="UNCHARACTERIZED TRANSCRIPTIONAL REGULATORY PROTEIN"/>
    <property type="match status" value="1"/>
</dbReference>
<dbReference type="PANTHER" id="PTHR31001:SF50">
    <property type="entry name" value="ZN(II)2CYS6 TRANSCRIPTION FACTOR (EUROFUNG)"/>
    <property type="match status" value="1"/>
</dbReference>
<dbReference type="Pfam" id="PF04082">
    <property type="entry name" value="Fungal_trans"/>
    <property type="match status" value="1"/>
</dbReference>
<dbReference type="Pfam" id="PF00172">
    <property type="entry name" value="Zn_clus"/>
    <property type="match status" value="1"/>
</dbReference>
<dbReference type="SMART" id="SM00906">
    <property type="entry name" value="Fungal_trans"/>
    <property type="match status" value="1"/>
</dbReference>
<dbReference type="SMART" id="SM00066">
    <property type="entry name" value="GAL4"/>
    <property type="match status" value="1"/>
</dbReference>
<dbReference type="SUPFAM" id="SSF57701">
    <property type="entry name" value="Zn2/Cys6 DNA-binding domain"/>
    <property type="match status" value="1"/>
</dbReference>
<dbReference type="PROSITE" id="PS00463">
    <property type="entry name" value="ZN2_CY6_FUNGAL_1"/>
    <property type="match status" value="1"/>
</dbReference>
<dbReference type="PROSITE" id="PS50048">
    <property type="entry name" value="ZN2_CY6_FUNGAL_2"/>
    <property type="match status" value="1"/>
</dbReference>
<sequence length="774" mass="85720">MEKSNRRKRPSTPHLSCELCRERKIKCDKVDPCNNCVSAGVVCIPVHRPRLPRGVHARRARPMSPTFVPPRAPTPVAGPVPSEKKQTDHSSGAVAAVDDDLRRRVHRLEAVVNSMRAAMQDSSPATVKQVSCEYWGIVGRADEEKSVLNDSYPAPTSSLACNASIPMTVQGQPPFESRPDCFWNNMVGEIEHFGGDVGSSSETKSDDHSSLAPNMPRMGDGGLRFLGLSGNNPTLTWTPVLEGKEMTRQLCQIYLQQVDPIIKILHRPTVEKWMLHGERYLDYPERHVAVDALRSAICYATAASLTDDQCSAIFQRSRSSGIVEDFRRECETALERSGFLVSPSITGLQAFVLYLIARRSEDRGQAAWTLTAVAVRLAKALGLHRERDETFFNQQMRRRLWLTISLMDLQASFSQASEPLISTEEATSTFFLPKHINDSDLDPTMTHEIPDREGLCDTTFALVTYHIQLAGRALNFGTTASPQHKASQQQHAQRFEENALRLLHFCDPESSPYAWFTWHGTQCLVSGARLSALRPLQLPQPSNGSSQPPSSPSPRPQEHNHELLRLALNVLEKAHLMHTDPRGEGFRWYVTMPWHALAVAINECSLSPDVVRIQSAWPTIEACYQLLRRKGVAGQEEAIQRPLEKLICQARDKASPLLQLARSSPTFSLGSSTGTSAAPTPRSRASSTPSDTLSDLSWPTAFSHAPSQLGMELAPVGPVQPFAKLDLDSLLSQFDIQGQPLLAGQIPPVDAELSLRTWEQLMSDIDAESNQLLP</sequence>
<evidence type="ECO:0000255" key="1">
    <source>
        <dbReference type="PROSITE-ProRule" id="PRU00227"/>
    </source>
</evidence>
<evidence type="ECO:0000256" key="2">
    <source>
        <dbReference type="SAM" id="MobiDB-lite"/>
    </source>
</evidence>
<evidence type="ECO:0000303" key="3">
    <source>
    </source>
</evidence>
<evidence type="ECO:0000305" key="4">
    <source>
    </source>
</evidence>
<evidence type="ECO:0000305" key="5">
    <source>
    </source>
</evidence>
<gene>
    <name evidence="3" type="primary">nscR</name>
    <name type="ORF">AFUA_7G00130</name>
</gene>